<accession>A8JUP7</accession>
<accession>A2RVC7</accession>
<accession>M9PJQ8</accession>
<accession>Q8SY50</accession>
<accession>Q9VWU2</accession>
<protein>
    <recommendedName>
        <fullName evidence="8">Serine protease Hayan</fullName>
        <ecNumber evidence="6">3.4.21.-</ecNumber>
    </recommendedName>
</protein>
<gene>
    <name evidence="11" type="primary">Hayan</name>
    <name evidence="11" type="ORF">CG6361</name>
</gene>
<dbReference type="EC" id="3.4.21.-" evidence="6"/>
<dbReference type="EMBL" id="AE014298">
    <property type="protein sequence ID" value="ABW09449.1"/>
    <property type="molecule type" value="Genomic_DNA"/>
</dbReference>
<dbReference type="EMBL" id="AE014298">
    <property type="protein sequence ID" value="AAF48845.2"/>
    <property type="molecule type" value="Genomic_DNA"/>
</dbReference>
<dbReference type="EMBL" id="AE014298">
    <property type="protein sequence ID" value="AGB95526.2"/>
    <property type="molecule type" value="Genomic_DNA"/>
</dbReference>
<dbReference type="EMBL" id="AY075342">
    <property type="protein sequence ID" value="AAL68205.1"/>
    <property type="molecule type" value="mRNA"/>
</dbReference>
<dbReference type="EMBL" id="BT029918">
    <property type="protein sequence ID" value="ABM92792.1"/>
    <property type="status" value="ALT_INIT"/>
    <property type="molecule type" value="mRNA"/>
</dbReference>
<dbReference type="RefSeq" id="NP_001097020.1">
    <molecule id="A8JUP7-1"/>
    <property type="nucleotide sequence ID" value="NM_001103550.2"/>
</dbReference>
<dbReference type="RefSeq" id="NP_001259684.2">
    <molecule id="A8JUP7-1"/>
    <property type="nucleotide sequence ID" value="NM_001272755.2"/>
</dbReference>
<dbReference type="RefSeq" id="NP_573296.2">
    <molecule id="A8JUP7-2"/>
    <property type="nucleotide sequence ID" value="NM_133068.3"/>
</dbReference>
<dbReference type="SMR" id="A8JUP7"/>
<dbReference type="STRING" id="7227.FBpp0111913"/>
<dbReference type="MEROPS" id="S01.B45"/>
<dbReference type="GlyGen" id="A8JUP7">
    <property type="glycosylation" value="5 sites"/>
</dbReference>
<dbReference type="PaxDb" id="7227-FBpp0111913"/>
<dbReference type="DNASU" id="32831"/>
<dbReference type="EnsemblMetazoa" id="FBtr0074630">
    <molecule id="A8JUP7-2"/>
    <property type="protein sequence ID" value="FBpp0074401"/>
    <property type="gene ID" value="FBgn0030925"/>
</dbReference>
<dbReference type="EnsemblMetazoa" id="FBtr0113000">
    <molecule id="A8JUP7-1"/>
    <property type="protein sequence ID" value="FBpp0111913"/>
    <property type="gene ID" value="FBgn0030925"/>
</dbReference>
<dbReference type="EnsemblMetazoa" id="FBtr0343048">
    <molecule id="A8JUP7-1"/>
    <property type="protein sequence ID" value="FBpp0309794"/>
    <property type="gene ID" value="FBgn0030925"/>
</dbReference>
<dbReference type="GeneID" id="32831"/>
<dbReference type="KEGG" id="dme:Dmel_CG6361"/>
<dbReference type="UCSC" id="CG6361-RA">
    <property type="organism name" value="d. melanogaster"/>
</dbReference>
<dbReference type="UCSC" id="CG6361-RB">
    <molecule id="A8JUP7-1"/>
    <property type="organism name" value="d. melanogaster"/>
</dbReference>
<dbReference type="AGR" id="FB:FBgn0030925"/>
<dbReference type="CTD" id="32831"/>
<dbReference type="FlyBase" id="FBgn0030925">
    <property type="gene designation" value="Hayan"/>
</dbReference>
<dbReference type="VEuPathDB" id="VectorBase:FBgn0030925"/>
<dbReference type="eggNOG" id="KOG3627">
    <property type="taxonomic scope" value="Eukaryota"/>
</dbReference>
<dbReference type="GeneTree" id="ENSGT00940000168826"/>
<dbReference type="InParanoid" id="A8JUP7"/>
<dbReference type="OMA" id="PTHESMN"/>
<dbReference type="OrthoDB" id="6357057at2759"/>
<dbReference type="PhylomeDB" id="A8JUP7"/>
<dbReference type="BioGRID-ORCS" id="32831">
    <property type="hits" value="0 hits in 1 CRISPR screen"/>
</dbReference>
<dbReference type="ChiTaRS" id="Hayan">
    <property type="organism name" value="fly"/>
</dbReference>
<dbReference type="GenomeRNAi" id="32831"/>
<dbReference type="PRO" id="PR:A8JUP7"/>
<dbReference type="Proteomes" id="UP000000803">
    <property type="component" value="Chromosome X"/>
</dbReference>
<dbReference type="Bgee" id="FBgn0030925">
    <property type="expression patterns" value="Expressed in fat body cell in arthropod fat body and 43 other cell types or tissues"/>
</dbReference>
<dbReference type="ExpressionAtlas" id="A8JUP7">
    <property type="expression patterns" value="baseline and differential"/>
</dbReference>
<dbReference type="GO" id="GO:0005615">
    <property type="term" value="C:extracellular space"/>
    <property type="evidence" value="ECO:0000318"/>
    <property type="project" value="GO_Central"/>
</dbReference>
<dbReference type="GO" id="GO:0004252">
    <property type="term" value="F:serine-type endopeptidase activity"/>
    <property type="evidence" value="ECO:0000255"/>
    <property type="project" value="FlyBase"/>
</dbReference>
<dbReference type="GO" id="GO:0050832">
    <property type="term" value="P:defense response to fungus"/>
    <property type="evidence" value="ECO:0000316"/>
    <property type="project" value="FlyBase"/>
</dbReference>
<dbReference type="GO" id="GO:0045087">
    <property type="term" value="P:innate immune response"/>
    <property type="evidence" value="ECO:0000318"/>
    <property type="project" value="GO_Central"/>
</dbReference>
<dbReference type="GO" id="GO:0042438">
    <property type="term" value="P:melanin biosynthetic process"/>
    <property type="evidence" value="ECO:0007669"/>
    <property type="project" value="UniProtKB-KW"/>
</dbReference>
<dbReference type="GO" id="GO:0035008">
    <property type="term" value="P:positive regulation of melanization defense response"/>
    <property type="evidence" value="ECO:0000315"/>
    <property type="project" value="FlyBase"/>
</dbReference>
<dbReference type="GO" id="GO:0006508">
    <property type="term" value="P:proteolysis"/>
    <property type="evidence" value="ECO:0000255"/>
    <property type="project" value="FlyBase"/>
</dbReference>
<dbReference type="GO" id="GO:0035007">
    <property type="term" value="P:regulation of melanization defense response"/>
    <property type="evidence" value="ECO:0000315"/>
    <property type="project" value="FlyBase"/>
</dbReference>
<dbReference type="GO" id="GO:0160032">
    <property type="term" value="P:Toll receptor ligand protein activation cascade"/>
    <property type="evidence" value="ECO:0000314"/>
    <property type="project" value="FlyBase"/>
</dbReference>
<dbReference type="CDD" id="cd00190">
    <property type="entry name" value="Tryp_SPc"/>
    <property type="match status" value="1"/>
</dbReference>
<dbReference type="FunFam" id="2.40.10.10:FF:000015">
    <property type="entry name" value="Atrial natriuretic peptide-converting enzyme"/>
    <property type="match status" value="1"/>
</dbReference>
<dbReference type="Gene3D" id="2.40.10.10">
    <property type="entry name" value="Trypsin-like serine proteases"/>
    <property type="match status" value="1"/>
</dbReference>
<dbReference type="InterPro" id="IPR022700">
    <property type="entry name" value="CLIP"/>
</dbReference>
<dbReference type="InterPro" id="IPR009003">
    <property type="entry name" value="Peptidase_S1_PA"/>
</dbReference>
<dbReference type="InterPro" id="IPR043504">
    <property type="entry name" value="Peptidase_S1_PA_chymotrypsin"/>
</dbReference>
<dbReference type="InterPro" id="IPR001314">
    <property type="entry name" value="Peptidase_S1A"/>
</dbReference>
<dbReference type="InterPro" id="IPR001254">
    <property type="entry name" value="Trypsin_dom"/>
</dbReference>
<dbReference type="InterPro" id="IPR018114">
    <property type="entry name" value="TRYPSIN_HIS"/>
</dbReference>
<dbReference type="InterPro" id="IPR033116">
    <property type="entry name" value="TRYPSIN_SER"/>
</dbReference>
<dbReference type="PANTHER" id="PTHR24252">
    <property type="entry name" value="ACROSIN-RELATED"/>
    <property type="match status" value="1"/>
</dbReference>
<dbReference type="PANTHER" id="PTHR24252:SF7">
    <property type="entry name" value="HYALIN"/>
    <property type="match status" value="1"/>
</dbReference>
<dbReference type="Pfam" id="PF00089">
    <property type="entry name" value="Trypsin"/>
    <property type="match status" value="1"/>
</dbReference>
<dbReference type="PRINTS" id="PR00722">
    <property type="entry name" value="CHYMOTRYPSIN"/>
</dbReference>
<dbReference type="SMART" id="SM00680">
    <property type="entry name" value="CLIP"/>
    <property type="match status" value="1"/>
</dbReference>
<dbReference type="SMART" id="SM00020">
    <property type="entry name" value="Tryp_SPc"/>
    <property type="match status" value="1"/>
</dbReference>
<dbReference type="SUPFAM" id="SSF50494">
    <property type="entry name" value="Trypsin-like serine proteases"/>
    <property type="match status" value="1"/>
</dbReference>
<dbReference type="PROSITE" id="PS51888">
    <property type="entry name" value="CLIP"/>
    <property type="match status" value="1"/>
</dbReference>
<dbReference type="PROSITE" id="PS50240">
    <property type="entry name" value="TRYPSIN_DOM"/>
    <property type="match status" value="1"/>
</dbReference>
<dbReference type="PROSITE" id="PS00134">
    <property type="entry name" value="TRYPSIN_HIS"/>
    <property type="match status" value="1"/>
</dbReference>
<dbReference type="PROSITE" id="PS00135">
    <property type="entry name" value="TRYPSIN_SER"/>
    <property type="match status" value="1"/>
</dbReference>
<sequence>MAMISARRYFLLGLLVLTTSAYVTVGDEGDPCQVRSDIPGICLSSSACENIRGYLKSGTLSTSQVPSCGFGAREEIICCPTVACCATDRGREVQFHATSSERSSLPEPKREPTPEPEPLPPTTTEGKRERESRLDENQNFFDFNKLLSTTVKPQKTHESLKLPTQESMKTPTHESMKMPTHESMKLPTHEPMKLPIQSVGAWGIAPSKTQPIASTQRSFMEPEWGREPRIVNRPLTTPRSRPQRPNNSNFNTNPSPNNNNLIHLVNDRLREQGMQIEPAREVPMVLQTTPTPTPAPTPTQLIDPFEPYRFRGQDRDKDTQPQEPWNDVSNNLDADPAPSIFNPAETRPTTPNPNPSRVNLPEKERPSVAACEKIRSGGKPLTVHILDGERVDRGVYPHMAAIAYNSFGSAAFRCGGSLIASRFVLTAAHCVNSDDSTPSFVRLGALNIENPEPGYQDINVIDVQIHPDYSGSSKYYDIAILQLAEDAKESDVIRPACLYTDRSDPPANYKYFVAGWGVMNVTNRAVSKILLRAALDLVPADECNASFAEQPSANRTLRRGVIASQLCAADKNQRKDACQGDSGGPLILEIDDVDGTYSIVGVISSGFGCATKTPGLYTRVSSFLDYIEGIVWPSNRF</sequence>
<reference evidence="12" key="1">
    <citation type="journal article" date="2000" name="Science">
        <title>The genome sequence of Drosophila melanogaster.</title>
        <authorList>
            <person name="Adams M.D."/>
            <person name="Celniker S.E."/>
            <person name="Holt R.A."/>
            <person name="Evans C.A."/>
            <person name="Gocayne J.D."/>
            <person name="Amanatides P.G."/>
            <person name="Scherer S.E."/>
            <person name="Li P.W."/>
            <person name="Hoskins R.A."/>
            <person name="Galle R.F."/>
            <person name="George R.A."/>
            <person name="Lewis S.E."/>
            <person name="Richards S."/>
            <person name="Ashburner M."/>
            <person name="Henderson S.N."/>
            <person name="Sutton G.G."/>
            <person name="Wortman J.R."/>
            <person name="Yandell M.D."/>
            <person name="Zhang Q."/>
            <person name="Chen L.X."/>
            <person name="Brandon R.C."/>
            <person name="Rogers Y.-H.C."/>
            <person name="Blazej R.G."/>
            <person name="Champe M."/>
            <person name="Pfeiffer B.D."/>
            <person name="Wan K.H."/>
            <person name="Doyle C."/>
            <person name="Baxter E.G."/>
            <person name="Helt G."/>
            <person name="Nelson C.R."/>
            <person name="Miklos G.L.G."/>
            <person name="Abril J.F."/>
            <person name="Agbayani A."/>
            <person name="An H.-J."/>
            <person name="Andrews-Pfannkoch C."/>
            <person name="Baldwin D."/>
            <person name="Ballew R.M."/>
            <person name="Basu A."/>
            <person name="Baxendale J."/>
            <person name="Bayraktaroglu L."/>
            <person name="Beasley E.M."/>
            <person name="Beeson K.Y."/>
            <person name="Benos P.V."/>
            <person name="Berman B.P."/>
            <person name="Bhandari D."/>
            <person name="Bolshakov S."/>
            <person name="Borkova D."/>
            <person name="Botchan M.R."/>
            <person name="Bouck J."/>
            <person name="Brokstein P."/>
            <person name="Brottier P."/>
            <person name="Burtis K.C."/>
            <person name="Busam D.A."/>
            <person name="Butler H."/>
            <person name="Cadieu E."/>
            <person name="Center A."/>
            <person name="Chandra I."/>
            <person name="Cherry J.M."/>
            <person name="Cawley S."/>
            <person name="Dahlke C."/>
            <person name="Davenport L.B."/>
            <person name="Davies P."/>
            <person name="de Pablos B."/>
            <person name="Delcher A."/>
            <person name="Deng Z."/>
            <person name="Mays A.D."/>
            <person name="Dew I."/>
            <person name="Dietz S.M."/>
            <person name="Dodson K."/>
            <person name="Doup L.E."/>
            <person name="Downes M."/>
            <person name="Dugan-Rocha S."/>
            <person name="Dunkov B.C."/>
            <person name="Dunn P."/>
            <person name="Durbin K.J."/>
            <person name="Evangelista C.C."/>
            <person name="Ferraz C."/>
            <person name="Ferriera S."/>
            <person name="Fleischmann W."/>
            <person name="Fosler C."/>
            <person name="Gabrielian A.E."/>
            <person name="Garg N.S."/>
            <person name="Gelbart W.M."/>
            <person name="Glasser K."/>
            <person name="Glodek A."/>
            <person name="Gong F."/>
            <person name="Gorrell J.H."/>
            <person name="Gu Z."/>
            <person name="Guan P."/>
            <person name="Harris M."/>
            <person name="Harris N.L."/>
            <person name="Harvey D.A."/>
            <person name="Heiman T.J."/>
            <person name="Hernandez J.R."/>
            <person name="Houck J."/>
            <person name="Hostin D."/>
            <person name="Houston K.A."/>
            <person name="Howland T.J."/>
            <person name="Wei M.-H."/>
            <person name="Ibegwam C."/>
            <person name="Jalali M."/>
            <person name="Kalush F."/>
            <person name="Karpen G.H."/>
            <person name="Ke Z."/>
            <person name="Kennison J.A."/>
            <person name="Ketchum K.A."/>
            <person name="Kimmel B.E."/>
            <person name="Kodira C.D."/>
            <person name="Kraft C.L."/>
            <person name="Kravitz S."/>
            <person name="Kulp D."/>
            <person name="Lai Z."/>
            <person name="Lasko P."/>
            <person name="Lei Y."/>
            <person name="Levitsky A.A."/>
            <person name="Li J.H."/>
            <person name="Li Z."/>
            <person name="Liang Y."/>
            <person name="Lin X."/>
            <person name="Liu X."/>
            <person name="Mattei B."/>
            <person name="McIntosh T.C."/>
            <person name="McLeod M.P."/>
            <person name="McPherson D."/>
            <person name="Merkulov G."/>
            <person name="Milshina N.V."/>
            <person name="Mobarry C."/>
            <person name="Morris J."/>
            <person name="Moshrefi A."/>
            <person name="Mount S.M."/>
            <person name="Moy M."/>
            <person name="Murphy B."/>
            <person name="Murphy L."/>
            <person name="Muzny D.M."/>
            <person name="Nelson D.L."/>
            <person name="Nelson D.R."/>
            <person name="Nelson K.A."/>
            <person name="Nixon K."/>
            <person name="Nusskern D.R."/>
            <person name="Pacleb J.M."/>
            <person name="Palazzolo M."/>
            <person name="Pittman G.S."/>
            <person name="Pan S."/>
            <person name="Pollard J."/>
            <person name="Puri V."/>
            <person name="Reese M.G."/>
            <person name="Reinert K."/>
            <person name="Remington K."/>
            <person name="Saunders R.D.C."/>
            <person name="Scheeler F."/>
            <person name="Shen H."/>
            <person name="Shue B.C."/>
            <person name="Siden-Kiamos I."/>
            <person name="Simpson M."/>
            <person name="Skupski M.P."/>
            <person name="Smith T.J."/>
            <person name="Spier E."/>
            <person name="Spradling A.C."/>
            <person name="Stapleton M."/>
            <person name="Strong R."/>
            <person name="Sun E."/>
            <person name="Svirskas R."/>
            <person name="Tector C."/>
            <person name="Turner R."/>
            <person name="Venter E."/>
            <person name="Wang A.H."/>
            <person name="Wang X."/>
            <person name="Wang Z.-Y."/>
            <person name="Wassarman D.A."/>
            <person name="Weinstock G.M."/>
            <person name="Weissenbach J."/>
            <person name="Williams S.M."/>
            <person name="Woodage T."/>
            <person name="Worley K.C."/>
            <person name="Wu D."/>
            <person name="Yang S."/>
            <person name="Yao Q.A."/>
            <person name="Ye J."/>
            <person name="Yeh R.-F."/>
            <person name="Zaveri J.S."/>
            <person name="Zhan M."/>
            <person name="Zhang G."/>
            <person name="Zhao Q."/>
            <person name="Zheng L."/>
            <person name="Zheng X.H."/>
            <person name="Zhong F.N."/>
            <person name="Zhong W."/>
            <person name="Zhou X."/>
            <person name="Zhu S.C."/>
            <person name="Zhu X."/>
            <person name="Smith H.O."/>
            <person name="Gibbs R.A."/>
            <person name="Myers E.W."/>
            <person name="Rubin G.M."/>
            <person name="Venter J.C."/>
        </authorList>
    </citation>
    <scope>NUCLEOTIDE SEQUENCE [LARGE SCALE GENOMIC DNA]</scope>
    <source>
        <strain evidence="12">Berkeley</strain>
    </source>
</reference>
<reference evidence="12" key="2">
    <citation type="journal article" date="2002" name="Genome Biol.">
        <title>Annotation of the Drosophila melanogaster euchromatic genome: a systematic review.</title>
        <authorList>
            <person name="Misra S."/>
            <person name="Crosby M.A."/>
            <person name="Mungall C.J."/>
            <person name="Matthews B.B."/>
            <person name="Campbell K.S."/>
            <person name="Hradecky P."/>
            <person name="Huang Y."/>
            <person name="Kaminker J.S."/>
            <person name="Millburn G.H."/>
            <person name="Prochnik S.E."/>
            <person name="Smith C.D."/>
            <person name="Tupy J.L."/>
            <person name="Whitfield E.J."/>
            <person name="Bayraktaroglu L."/>
            <person name="Berman B.P."/>
            <person name="Bettencourt B.R."/>
            <person name="Celniker S.E."/>
            <person name="de Grey A.D.N.J."/>
            <person name="Drysdale R.A."/>
            <person name="Harris N.L."/>
            <person name="Richter J."/>
            <person name="Russo S."/>
            <person name="Schroeder A.J."/>
            <person name="Shu S.Q."/>
            <person name="Stapleton M."/>
            <person name="Yamada C."/>
            <person name="Ashburner M."/>
            <person name="Gelbart W.M."/>
            <person name="Rubin G.M."/>
            <person name="Lewis S.E."/>
        </authorList>
    </citation>
    <scope>GENOME REANNOTATION</scope>
    <source>
        <strain evidence="12">Berkeley</strain>
    </source>
</reference>
<reference evidence="9" key="3">
    <citation type="submission" date="2002-01" db="EMBL/GenBank/DDBJ databases">
        <authorList>
            <person name="Stapleton M."/>
            <person name="Brokstein P."/>
            <person name="Hong L."/>
            <person name="Agbayani A."/>
            <person name="Carlson J."/>
            <person name="Champe M."/>
            <person name="Chavez C."/>
            <person name="Dorsett V."/>
            <person name="Dresnek D."/>
            <person name="Farfan D."/>
            <person name="Frise E."/>
            <person name="George R."/>
            <person name="Gonzalez M."/>
            <person name="Guarin H."/>
            <person name="Kronmiller B."/>
            <person name="Li P."/>
            <person name="Liao G."/>
            <person name="Miranda A."/>
            <person name="Mungall C.J."/>
            <person name="Nunoo J."/>
            <person name="Pacleb J."/>
            <person name="Paragas V."/>
            <person name="Park S."/>
            <person name="Patel S."/>
            <person name="Phouanenavong S."/>
            <person name="Wan K."/>
            <person name="Yu C."/>
            <person name="Lewis S.E."/>
            <person name="Rubin G.M."/>
            <person name="Celniker S."/>
        </authorList>
    </citation>
    <scope>NUCLEOTIDE SEQUENCE [LARGE SCALE MRNA]</scope>
    <source>
        <strain evidence="9">Berkeley</strain>
    </source>
</reference>
<reference evidence="10" key="4">
    <citation type="submission" date="2007-01" db="EMBL/GenBank/DDBJ databases">
        <authorList>
            <person name="Stapleton M."/>
            <person name="Carlson J."/>
            <person name="Frise E."/>
            <person name="Kapadia B."/>
            <person name="Park S."/>
            <person name="Wan K."/>
            <person name="Yu C."/>
            <person name="Celniker S."/>
        </authorList>
    </citation>
    <scope>NUCLEOTIDE SEQUENCE [LARGE SCALE MRNA]</scope>
    <source>
        <strain evidence="10">Berkeley</strain>
    </source>
</reference>
<reference evidence="7" key="5">
    <citation type="journal article" date="2012" name="EMBO J.">
        <title>Genetic evidence of a redox-dependent systemic wound response via Hayan protease-phenoloxidase system in Drosophila.</title>
        <authorList>
            <person name="Nam H.J."/>
            <person name="Jang I.H."/>
            <person name="You H."/>
            <person name="Lee K.A."/>
            <person name="Lee W.J."/>
        </authorList>
    </citation>
    <scope>FUNCTION</scope>
    <scope>INDUCTION BY WOUNDING AND BACTERIA</scope>
    <scope>DISRUPTION PHENOTYPE</scope>
</reference>
<keyword id="KW-0025">Alternative splicing</keyword>
<keyword id="KW-1015">Disulfide bond</keyword>
<keyword id="KW-0378">Hydrolase</keyword>
<keyword id="KW-0391">Immunity</keyword>
<keyword id="KW-0470">Melanin biosynthesis</keyword>
<keyword id="KW-0645">Protease</keyword>
<keyword id="KW-1185">Reference proteome</keyword>
<keyword id="KW-0964">Secreted</keyword>
<keyword id="KW-0720">Serine protease</keyword>
<keyword id="KW-0732">Signal</keyword>
<proteinExistence type="evidence at transcript level"/>
<feature type="signal peptide" evidence="2">
    <location>
        <begin position="1"/>
        <end position="26"/>
    </location>
</feature>
<feature type="chain" id="PRO_5006947370" description="Serine protease Hayan">
    <location>
        <begin position="27"/>
        <end position="637"/>
    </location>
</feature>
<feature type="domain" description="Clip" evidence="4">
    <location>
        <begin position="31"/>
        <end position="79"/>
    </location>
</feature>
<feature type="domain" description="Peptidase S1" evidence="3">
    <location>
        <begin position="385"/>
        <end position="632"/>
    </location>
</feature>
<feature type="region of interest" description="Disordered" evidence="5">
    <location>
        <begin position="95"/>
        <end position="137"/>
    </location>
</feature>
<feature type="region of interest" description="Disordered" evidence="5">
    <location>
        <begin position="152"/>
        <end position="178"/>
    </location>
</feature>
<feature type="region of interest" description="Disordered" evidence="5">
    <location>
        <begin position="216"/>
        <end position="260"/>
    </location>
</feature>
<feature type="region of interest" description="Disordered" evidence="5">
    <location>
        <begin position="286"/>
        <end position="365"/>
    </location>
</feature>
<feature type="compositionally biased region" description="Basic and acidic residues" evidence="5">
    <location>
        <begin position="125"/>
        <end position="136"/>
    </location>
</feature>
<feature type="compositionally biased region" description="Polar residues" evidence="5">
    <location>
        <begin position="234"/>
        <end position="244"/>
    </location>
</feature>
<feature type="compositionally biased region" description="Low complexity" evidence="5">
    <location>
        <begin position="245"/>
        <end position="260"/>
    </location>
</feature>
<feature type="compositionally biased region" description="Basic and acidic residues" evidence="5">
    <location>
        <begin position="306"/>
        <end position="320"/>
    </location>
</feature>
<feature type="compositionally biased region" description="Polar residues" evidence="5">
    <location>
        <begin position="321"/>
        <end position="332"/>
    </location>
</feature>
<feature type="active site" description="Charge relay system" evidence="3">
    <location>
        <position position="429"/>
    </location>
</feature>
<feature type="active site" description="Charge relay system" evidence="3">
    <location>
        <position position="477"/>
    </location>
</feature>
<feature type="active site" description="Charge relay system" evidence="3">
    <location>
        <position position="582"/>
    </location>
</feature>
<feature type="disulfide bond" evidence="4">
    <location>
        <begin position="32"/>
        <end position="78"/>
    </location>
</feature>
<feature type="disulfide bond" evidence="4">
    <location>
        <begin position="42"/>
        <end position="68"/>
    </location>
</feature>
<feature type="disulfide bond" evidence="4">
    <location>
        <begin position="48"/>
        <end position="79"/>
    </location>
</feature>
<feature type="disulfide bond" evidence="1">
    <location>
        <begin position="371"/>
        <end position="497"/>
    </location>
</feature>
<feature type="disulfide bond" evidence="3">
    <location>
        <begin position="414"/>
        <end position="430"/>
    </location>
</feature>
<feature type="disulfide bond" evidence="3">
    <location>
        <begin position="543"/>
        <end position="567"/>
    </location>
</feature>
<feature type="disulfide bond" evidence="3">
    <location>
        <begin position="578"/>
        <end position="609"/>
    </location>
</feature>
<feature type="splice variant" id="VSP_058363" description="In isoform A.">
    <original>DRGREVQFHATSSERSSLPEPKREPTPEPEPLPPTTTEGKRERESRLDENQNFFDFNKLLSTTVKPQKTHESLKLPTQESMKTPTHESMKMPTHESMKLPTHEPMKLPIQSVGAWGIAPSKTQPIASTQRSFMEPEWGREPRIVNRPLTTPRSRPQRPNNSNFNTNPSPNNNNLIHLVNDRLREQGMQIEPAREVPMVLQTTPTPTPAPTPTQLIDPFEPYRFRGQDRDKDTQPQEPWNDVSNNLDADPAPSIFNPAETR</original>
    <variation>E</variation>
    <location>
        <begin position="88"/>
        <end position="347"/>
    </location>
</feature>
<name>HAYAN_DROME</name>
<organism evidence="12">
    <name type="scientific">Drosophila melanogaster</name>
    <name type="common">Fruit fly</name>
    <dbReference type="NCBI Taxonomy" id="7227"/>
    <lineage>
        <taxon>Eukaryota</taxon>
        <taxon>Metazoa</taxon>
        <taxon>Ecdysozoa</taxon>
        <taxon>Arthropoda</taxon>
        <taxon>Hexapoda</taxon>
        <taxon>Insecta</taxon>
        <taxon>Pterygota</taxon>
        <taxon>Neoptera</taxon>
        <taxon>Endopterygota</taxon>
        <taxon>Diptera</taxon>
        <taxon>Brachycera</taxon>
        <taxon>Muscomorpha</taxon>
        <taxon>Ephydroidea</taxon>
        <taxon>Drosophilidae</taxon>
        <taxon>Drosophila</taxon>
        <taxon>Sophophora</taxon>
    </lineage>
</organism>
<comment type="function">
    <text evidence="6">Serine protease which, by converting prophenoloxidase 1 (PPO1) into its active form, plays an essential role in the melanization immune response to physical or septic wounding. May function in diverse PPO1-activating cascades that are negatively controlled by different serpin proteins; Spn27A and Spn28D in the hemolymph, and Spn28D and Spn77BA in the trachea. Also required in the systematic wound response by mediating the redox-dependent activation of the JNK cytoprotective cascade in neuronal tissues after integument wounding.</text>
</comment>
<comment type="subcellular location">
    <subcellularLocation>
        <location evidence="8">Secreted</location>
    </subcellularLocation>
</comment>
<comment type="alternative products">
    <event type="alternative splicing"/>
    <isoform>
        <id>A8JUP7-1</id>
        <name evidence="11">B</name>
        <sequence type="displayed"/>
    </isoform>
    <isoform>
        <id>A8JUP7-2</id>
        <name evidence="11">A</name>
        <sequence type="described" ref="VSP_058363"/>
    </isoform>
</comment>
<comment type="induction">
    <text evidence="6">Up-regulated after wounding to the integument. Levels are higher with septic wounding, using either Gram-negative or Gram-positive bacteria.</text>
</comment>
<comment type="domain">
    <text evidence="4">The clip domain consists of 35-55 residues which are 'knitted' together usually by 3 conserved disulfide bonds forming a clip-like compact structure.</text>
</comment>
<comment type="disruption phenotype">
    <text evidence="6">Viable and fertile with no obvious phenotype. Reduced adult survival after wounding of the thorax, especially when the injury completely penetrates the thorax (strong wound). Wounding coupled with septic infection (septic injury) does not further reduce survival. Survival after wounding is increased when flies ingest the oxidant paraquat. Impaired melanization at the wound site. In pupae, aseptic and septic-injury does not induce the cleavage of PPO1, and in adults and larvae PPO1 activity is abolished.</text>
</comment>
<comment type="similarity">
    <text evidence="4 7">Belongs to the peptidase S1 family. CLIP subfamily.</text>
</comment>
<comment type="sequence caution" evidence="7">
    <conflict type="erroneous initiation">
        <sequence resource="EMBL-CDS" id="ABM92792"/>
    </conflict>
    <text>Extended N-terminus.</text>
</comment>
<evidence type="ECO:0000250" key="1">
    <source>
        <dbReference type="UniProtKB" id="Q9VB68"/>
    </source>
</evidence>
<evidence type="ECO:0000255" key="2"/>
<evidence type="ECO:0000255" key="3">
    <source>
        <dbReference type="PROSITE-ProRule" id="PRU00274"/>
    </source>
</evidence>
<evidence type="ECO:0000255" key="4">
    <source>
        <dbReference type="PROSITE-ProRule" id="PRU01236"/>
    </source>
</evidence>
<evidence type="ECO:0000256" key="5">
    <source>
        <dbReference type="SAM" id="MobiDB-lite"/>
    </source>
</evidence>
<evidence type="ECO:0000269" key="6">
    <source>
    </source>
</evidence>
<evidence type="ECO:0000305" key="7"/>
<evidence type="ECO:0000305" key="8">
    <source>
    </source>
</evidence>
<evidence type="ECO:0000312" key="9">
    <source>
        <dbReference type="EMBL" id="AAL68205.1"/>
    </source>
</evidence>
<evidence type="ECO:0000312" key="10">
    <source>
        <dbReference type="EMBL" id="ABM92792.1"/>
    </source>
</evidence>
<evidence type="ECO:0000312" key="11">
    <source>
        <dbReference type="FlyBase" id="FBgn0030925"/>
    </source>
</evidence>
<evidence type="ECO:0000312" key="12">
    <source>
        <dbReference type="Proteomes" id="UP000000803"/>
    </source>
</evidence>